<gene>
    <name evidence="1" type="primary">rpl1</name>
    <name type="ordered locus">TV0423</name>
    <name type="ORF">TVG0408391</name>
</gene>
<sequence length="217" mass="23856">MDINDISKAVEAVKQSSPQRKFEESVEIAINLKDIDMTNPKNRINEEILLPNGRGKDVKVVIFGSEELKAKAKGVADYIFGPEDISKFAEDKKAFKKIVNDAYFFIAEATLMANIGKSLGQVLGPRGKMPRPIPPGQDPVPLIKALKNTVKARSRNSLTLHVPVGTRSMDTQKISENIMAILNRITGKLERGHSNIKNVYVKTTMGKAVQVGTGDQN</sequence>
<comment type="function">
    <text evidence="1">Binds directly to 23S rRNA. Probably involved in E site tRNA release.</text>
</comment>
<comment type="function">
    <text evidence="1">Protein L1 is also a translational repressor protein, it controls the translation of its operon by binding to its mRNA.</text>
</comment>
<comment type="subunit">
    <text evidence="1">Part of the 50S ribosomal subunit.</text>
</comment>
<comment type="similarity">
    <text evidence="1">Belongs to the universal ribosomal protein uL1 family.</text>
</comment>
<dbReference type="EMBL" id="BA000011">
    <property type="protein sequence ID" value="BAB59565.1"/>
    <property type="molecule type" value="Genomic_DNA"/>
</dbReference>
<dbReference type="RefSeq" id="WP_010916680.1">
    <property type="nucleotide sequence ID" value="NC_002689.2"/>
</dbReference>
<dbReference type="SMR" id="Q97BN2"/>
<dbReference type="STRING" id="273116.gene:9381201"/>
<dbReference type="PaxDb" id="273116-14324638"/>
<dbReference type="GeneID" id="1440938"/>
<dbReference type="KEGG" id="tvo:TVG0408391"/>
<dbReference type="eggNOG" id="arCOG04289">
    <property type="taxonomic scope" value="Archaea"/>
</dbReference>
<dbReference type="HOGENOM" id="CLU_062853_4_0_2"/>
<dbReference type="OrthoDB" id="10382at2157"/>
<dbReference type="PhylomeDB" id="Q97BN2"/>
<dbReference type="Proteomes" id="UP000001017">
    <property type="component" value="Chromosome"/>
</dbReference>
<dbReference type="GO" id="GO:0015934">
    <property type="term" value="C:large ribosomal subunit"/>
    <property type="evidence" value="ECO:0007669"/>
    <property type="project" value="InterPro"/>
</dbReference>
<dbReference type="GO" id="GO:0019843">
    <property type="term" value="F:rRNA binding"/>
    <property type="evidence" value="ECO:0007669"/>
    <property type="project" value="UniProtKB-UniRule"/>
</dbReference>
<dbReference type="GO" id="GO:0003735">
    <property type="term" value="F:structural constituent of ribosome"/>
    <property type="evidence" value="ECO:0007669"/>
    <property type="project" value="InterPro"/>
</dbReference>
<dbReference type="GO" id="GO:0000049">
    <property type="term" value="F:tRNA binding"/>
    <property type="evidence" value="ECO:0007669"/>
    <property type="project" value="UniProtKB-KW"/>
</dbReference>
<dbReference type="GO" id="GO:0006417">
    <property type="term" value="P:regulation of translation"/>
    <property type="evidence" value="ECO:0007669"/>
    <property type="project" value="UniProtKB-KW"/>
</dbReference>
<dbReference type="GO" id="GO:0006412">
    <property type="term" value="P:translation"/>
    <property type="evidence" value="ECO:0007669"/>
    <property type="project" value="UniProtKB-UniRule"/>
</dbReference>
<dbReference type="CDD" id="cd00403">
    <property type="entry name" value="Ribosomal_L1"/>
    <property type="match status" value="1"/>
</dbReference>
<dbReference type="FunFam" id="3.40.50.790:FF:000005">
    <property type="entry name" value="50S ribosomal protein L1"/>
    <property type="match status" value="1"/>
</dbReference>
<dbReference type="Gene3D" id="3.30.190.20">
    <property type="match status" value="1"/>
</dbReference>
<dbReference type="Gene3D" id="3.40.50.790">
    <property type="match status" value="1"/>
</dbReference>
<dbReference type="HAMAP" id="MF_01318_A">
    <property type="entry name" value="Ribosomal_uL1_A"/>
    <property type="match status" value="1"/>
</dbReference>
<dbReference type="InterPro" id="IPR002143">
    <property type="entry name" value="Ribosomal_uL1"/>
</dbReference>
<dbReference type="InterPro" id="IPR023674">
    <property type="entry name" value="Ribosomal_uL1-like"/>
</dbReference>
<dbReference type="InterPro" id="IPR028364">
    <property type="entry name" value="Ribosomal_uL1/biogenesis"/>
</dbReference>
<dbReference type="InterPro" id="IPR016095">
    <property type="entry name" value="Ribosomal_uL1_3-a/b-sand"/>
</dbReference>
<dbReference type="InterPro" id="IPR023669">
    <property type="entry name" value="Ribosomal_uL1_arc"/>
</dbReference>
<dbReference type="InterPro" id="IPR023673">
    <property type="entry name" value="Ribosomal_uL1_CS"/>
</dbReference>
<dbReference type="NCBIfam" id="NF003244">
    <property type="entry name" value="PRK04203.1"/>
    <property type="match status" value="1"/>
</dbReference>
<dbReference type="PANTHER" id="PTHR36427">
    <property type="entry name" value="54S RIBOSOMAL PROTEIN L1, MITOCHONDRIAL"/>
    <property type="match status" value="1"/>
</dbReference>
<dbReference type="PANTHER" id="PTHR36427:SF3">
    <property type="entry name" value="LARGE RIBOSOMAL SUBUNIT PROTEIN UL1M"/>
    <property type="match status" value="1"/>
</dbReference>
<dbReference type="Pfam" id="PF00687">
    <property type="entry name" value="Ribosomal_L1"/>
    <property type="match status" value="1"/>
</dbReference>
<dbReference type="PIRSF" id="PIRSF002155">
    <property type="entry name" value="Ribosomal_L1"/>
    <property type="match status" value="1"/>
</dbReference>
<dbReference type="SUPFAM" id="SSF56808">
    <property type="entry name" value="Ribosomal protein L1"/>
    <property type="match status" value="1"/>
</dbReference>
<dbReference type="PROSITE" id="PS01199">
    <property type="entry name" value="RIBOSOMAL_L1"/>
    <property type="match status" value="1"/>
</dbReference>
<organism>
    <name type="scientific">Thermoplasma volcanium (strain ATCC 51530 / DSM 4299 / JCM 9571 / NBRC 15438 / GSS1)</name>
    <dbReference type="NCBI Taxonomy" id="273116"/>
    <lineage>
        <taxon>Archaea</taxon>
        <taxon>Methanobacteriati</taxon>
        <taxon>Thermoplasmatota</taxon>
        <taxon>Thermoplasmata</taxon>
        <taxon>Thermoplasmatales</taxon>
        <taxon>Thermoplasmataceae</taxon>
        <taxon>Thermoplasma</taxon>
    </lineage>
</organism>
<name>RL1_THEVO</name>
<protein>
    <recommendedName>
        <fullName evidence="1">Large ribosomal subunit protein uL1</fullName>
    </recommendedName>
    <alternativeName>
        <fullName evidence="2">50S ribosomal protein L1</fullName>
    </alternativeName>
</protein>
<accession>Q97BN2</accession>
<proteinExistence type="inferred from homology"/>
<feature type="chain" id="PRO_0000125816" description="Large ribosomal subunit protein uL1">
    <location>
        <begin position="1"/>
        <end position="217"/>
    </location>
</feature>
<evidence type="ECO:0000255" key="1">
    <source>
        <dbReference type="HAMAP-Rule" id="MF_01318"/>
    </source>
</evidence>
<evidence type="ECO:0000305" key="2"/>
<keyword id="KW-0678">Repressor</keyword>
<keyword id="KW-0687">Ribonucleoprotein</keyword>
<keyword id="KW-0689">Ribosomal protein</keyword>
<keyword id="KW-0694">RNA-binding</keyword>
<keyword id="KW-0699">rRNA-binding</keyword>
<keyword id="KW-0810">Translation regulation</keyword>
<keyword id="KW-0820">tRNA-binding</keyword>
<reference key="1">
    <citation type="journal article" date="2000" name="Proc. Natl. Acad. Sci. U.S.A.">
        <title>Archaeal adaptation to higher temperatures revealed by genomic sequence of Thermoplasma volcanium.</title>
        <authorList>
            <person name="Kawashima T."/>
            <person name="Amano N."/>
            <person name="Koike H."/>
            <person name="Makino S."/>
            <person name="Higuchi S."/>
            <person name="Kawashima-Ohya Y."/>
            <person name="Watanabe K."/>
            <person name="Yamazaki M."/>
            <person name="Kanehori K."/>
            <person name="Kawamoto T."/>
            <person name="Nunoshiba T."/>
            <person name="Yamamoto Y."/>
            <person name="Aramaki H."/>
            <person name="Makino K."/>
            <person name="Suzuki M."/>
        </authorList>
    </citation>
    <scope>NUCLEOTIDE SEQUENCE [LARGE SCALE GENOMIC DNA]</scope>
    <source>
        <strain>ATCC 51530 / DSM 4299 / JCM 9571 / NBRC 15438 / GSS1</strain>
    </source>
</reference>